<gene>
    <name evidence="3" type="primary">tla3</name>
    <name evidence="4" type="ordered locus">PA0259</name>
</gene>
<proteinExistence type="evidence at protein level"/>
<evidence type="ECO:0000256" key="1">
    <source>
        <dbReference type="SAM" id="MobiDB-lite"/>
    </source>
</evidence>
<evidence type="ECO:0000269" key="2">
    <source>
    </source>
</evidence>
<evidence type="ECO:0000303" key="3">
    <source>
    </source>
</evidence>
<evidence type="ECO:0000312" key="4">
    <source>
        <dbReference type="EMBL" id="AAG03648.1"/>
    </source>
</evidence>
<dbReference type="EMBL" id="AE004091">
    <property type="protein sequence ID" value="AAG03648.1"/>
    <property type="molecule type" value="Genomic_DNA"/>
</dbReference>
<dbReference type="PIR" id="F83612">
    <property type="entry name" value="F83612"/>
</dbReference>
<dbReference type="RefSeq" id="NP_248950.1">
    <property type="nucleotide sequence ID" value="NC_002516.2"/>
</dbReference>
<dbReference type="RefSeq" id="WP_010895500.1">
    <property type="nucleotide sequence ID" value="NC_002516.2"/>
</dbReference>
<dbReference type="IntAct" id="Q9I6N0">
    <property type="interactions" value="2"/>
</dbReference>
<dbReference type="MINT" id="Q9I6N0"/>
<dbReference type="STRING" id="208964.PA0259"/>
<dbReference type="PaxDb" id="208964-PA0259"/>
<dbReference type="GeneID" id="881892"/>
<dbReference type="KEGG" id="pae:PA0259"/>
<dbReference type="PATRIC" id="fig|208964.12.peg.270"/>
<dbReference type="PseudoCAP" id="PA0259"/>
<dbReference type="HOGENOM" id="CLU_508852_0_0_6"/>
<dbReference type="InParanoid" id="Q9I6N0"/>
<dbReference type="OrthoDB" id="8837296at2"/>
<dbReference type="BioCyc" id="PAER208964:G1FZ6-261-MONOMER"/>
<dbReference type="Proteomes" id="UP000002438">
    <property type="component" value="Chromosome"/>
</dbReference>
<dbReference type="GO" id="GO:0005737">
    <property type="term" value="C:cytoplasm"/>
    <property type="evidence" value="ECO:0007669"/>
    <property type="project" value="UniProtKB-SubCell"/>
</dbReference>
<dbReference type="GO" id="GO:0042802">
    <property type="term" value="F:identical protein binding"/>
    <property type="evidence" value="ECO:0000353"/>
    <property type="project" value="IntAct"/>
</dbReference>
<dbReference type="InterPro" id="IPR048303">
    <property type="entry name" value="Tla3_C"/>
</dbReference>
<dbReference type="InterPro" id="IPR021531">
    <property type="entry name" value="Tla3_N"/>
</dbReference>
<dbReference type="Pfam" id="PF20995">
    <property type="entry name" value="Tla3_C"/>
    <property type="match status" value="1"/>
</dbReference>
<dbReference type="Pfam" id="PF11394">
    <property type="entry name" value="Tla3_N"/>
    <property type="match status" value="1"/>
</dbReference>
<accession>Q9I6N0</accession>
<feature type="chain" id="PRO_0000460812" description="Type VI lipase adapter protein Tla3">
    <location>
        <begin position="1"/>
        <end position="480"/>
    </location>
</feature>
<feature type="region of interest" description="Disordered" evidence="1">
    <location>
        <begin position="410"/>
        <end position="458"/>
    </location>
</feature>
<reference key="1">
    <citation type="journal article" date="2000" name="Nature">
        <title>Complete genome sequence of Pseudomonas aeruginosa PAO1, an opportunistic pathogen.</title>
        <authorList>
            <person name="Stover C.K."/>
            <person name="Pham X.-Q.T."/>
            <person name="Erwin A.L."/>
            <person name="Mizoguchi S.D."/>
            <person name="Warrener P."/>
            <person name="Hickey M.J."/>
            <person name="Brinkman F.S.L."/>
            <person name="Hufnagle W.O."/>
            <person name="Kowalik D.J."/>
            <person name="Lagrou M."/>
            <person name="Garber R.L."/>
            <person name="Goltry L."/>
            <person name="Tolentino E."/>
            <person name="Westbrock-Wadman S."/>
            <person name="Yuan Y."/>
            <person name="Brody L.L."/>
            <person name="Coulter S.N."/>
            <person name="Folger K.R."/>
            <person name="Kas A."/>
            <person name="Larbig K."/>
            <person name="Lim R.M."/>
            <person name="Smith K.A."/>
            <person name="Spencer D.H."/>
            <person name="Wong G.K.-S."/>
            <person name="Wu Z."/>
            <person name="Paulsen I.T."/>
            <person name="Reizer J."/>
            <person name="Saier M.H. Jr."/>
            <person name="Hancock R.E.W."/>
            <person name="Lory S."/>
            <person name="Olson M.V."/>
        </authorList>
    </citation>
    <scope>NUCLEOTIDE SEQUENCE [LARGE SCALE GENOMIC DNA]</scope>
    <source>
        <strain>ATCC 15692 / DSM 22644 / CIP 104116 / JCM 14847 / LMG 12228 / 1C / PRS 101 / PAO1</strain>
    </source>
</reference>
<reference key="2">
    <citation type="journal article" date="2019" name="Front. Microbiol.">
        <title>A Type VI Secretion System Trans-Kingdom Effector Is Required for the Delivery of a Novel Antibacterial Toxin in Pseudomonas aeruginosa.</title>
        <authorList>
            <person name="Berni B."/>
            <person name="Soscia C."/>
            <person name="Djermoun S."/>
            <person name="Ize B."/>
            <person name="Bleves S."/>
        </authorList>
    </citation>
    <scope>FUNCTION</scope>
    <scope>INTERACTION WITH TLE3 AND VGRG2B</scope>
    <scope>SUBCELLULAR LOCATION</scope>
    <source>
        <strain>ATCC 15692 / DSM 22644 / CIP 104116 / JCM 14847 / LMG 12228 / 1C / PRS 101 / PAO1</strain>
    </source>
</reference>
<keyword id="KW-0963">Cytoplasm</keyword>
<keyword id="KW-1185">Reference proteome</keyword>
<organism>
    <name type="scientific">Pseudomonas aeruginosa (strain ATCC 15692 / DSM 22644 / CIP 104116 / JCM 14847 / LMG 12228 / 1C / PRS 101 / PAO1)</name>
    <dbReference type="NCBI Taxonomy" id="208964"/>
    <lineage>
        <taxon>Bacteria</taxon>
        <taxon>Pseudomonadati</taxon>
        <taxon>Pseudomonadota</taxon>
        <taxon>Gammaproteobacteria</taxon>
        <taxon>Pseudomonadales</taxon>
        <taxon>Pseudomonadaceae</taxon>
        <taxon>Pseudomonas</taxon>
    </lineage>
</organism>
<sequence length="480" mass="52445">MSADAYHPPTTSPRLETLDVLSIGMSLDVFRQGQVWKALQEQNAAQAEALHVGSILPMDPKKYPTSADDKDMAYEKRQADALELGLKNFLEKWPIPTVTVVRGWDPSTPNLRFTPEETRESLSVKVNDLRVPAGLHWHRIANLQDGIICNDTPEGVLEALFSLFERNPDLPAVLVYANEGISMAGALSSRDVTLKSLGAVSGPRIPGTLTDAMVALIVGRPERVDWLRQFAPYTKVNENRIDPEFRGWGWRKPPVEFRPTPFIPQPWTERALEQWDALPVLARLHRPVSVPLTHPDTGERLKREALTAQLAAAWKTASAGLRPAPARLFYDGGLNATPLAELTPALGAAQSSLDLLDSRESYDLTQRLGDTGAASPFVGITLATMASYLNGDSSMVMPLRRKDQATLIGISSPTPGKKPVHDPFGVDLLPQTASGDGPPPSADPVAPASRLTTRLPPGEDYALEEFLSSLKPSTDWQDDL</sequence>
<protein>
    <recommendedName>
        <fullName evidence="3">Type VI lipase adapter protein Tla3</fullName>
    </recommendedName>
</protein>
<name>TLA3_PSEAE</name>
<comment type="function">
    <text evidence="2">Adapter protein that targets and loads the Tle3 toxin onto the H2 type VI secretion system (H2-T6SS) machinery through an interaction with the TTR domain of VgrG2b (PubMed:31231326). Seems specific for Tle3 (PubMed:31231326).</text>
</comment>
<comment type="subunit">
    <text evidence="2">Interacts with the Tle3 toxin on one side and with the H2-T6SS component VgrG2b on the other side.</text>
</comment>
<comment type="interaction">
    <interactant intactId="EBI-44433867">
        <id>Q9I6N0</id>
    </interactant>
    <interactant intactId="EBI-44433867">
        <id>Q9I6N0</id>
        <label>tla3</label>
    </interactant>
    <organismsDiffer>false</organismsDiffer>
    <experiments>3</experiments>
</comment>
<comment type="interaction">
    <interactant intactId="EBI-44433867">
        <id>Q9I6N0</id>
    </interactant>
    <interactant intactId="EBI-44433707">
        <id>Q9I6M9</id>
        <label>tle3</label>
    </interactant>
    <organismsDiffer>false</organismsDiffer>
    <experiments>4</experiments>
</comment>
<comment type="interaction">
    <interactant intactId="EBI-44433867">
        <id>Q9I6N0</id>
    </interactant>
    <interactant intactId="EBI-44433945">
        <id>Q9I6M7</id>
        <label>vgrG2b</label>
    </interactant>
    <organismsDiffer>false</organismsDiffer>
    <experiments>2</experiments>
</comment>
<comment type="subcellular location">
    <subcellularLocation>
        <location evidence="2">Cytoplasm</location>
    </subcellularLocation>
    <text evidence="2">Is not co-secreted with Tle3.</text>
</comment>